<accession>Q1D084</accession>
<comment type="function">
    <text evidence="1">Catalyzes the attachment of alanine to tRNA(Ala) in a two-step reaction: alanine is first activated by ATP to form Ala-AMP and then transferred to the acceptor end of tRNA(Ala). Also edits incorrectly charged Ser-tRNA(Ala) and Gly-tRNA(Ala) via its editing domain.</text>
</comment>
<comment type="catalytic activity">
    <reaction evidence="1">
        <text>tRNA(Ala) + L-alanine + ATP = L-alanyl-tRNA(Ala) + AMP + diphosphate</text>
        <dbReference type="Rhea" id="RHEA:12540"/>
        <dbReference type="Rhea" id="RHEA-COMP:9657"/>
        <dbReference type="Rhea" id="RHEA-COMP:9923"/>
        <dbReference type="ChEBI" id="CHEBI:30616"/>
        <dbReference type="ChEBI" id="CHEBI:33019"/>
        <dbReference type="ChEBI" id="CHEBI:57972"/>
        <dbReference type="ChEBI" id="CHEBI:78442"/>
        <dbReference type="ChEBI" id="CHEBI:78497"/>
        <dbReference type="ChEBI" id="CHEBI:456215"/>
        <dbReference type="EC" id="6.1.1.7"/>
    </reaction>
</comment>
<comment type="cofactor">
    <cofactor evidence="1">
        <name>Zn(2+)</name>
        <dbReference type="ChEBI" id="CHEBI:29105"/>
    </cofactor>
    <text evidence="1">Binds 1 zinc ion per subunit.</text>
</comment>
<comment type="subcellular location">
    <subcellularLocation>
        <location evidence="1">Cytoplasm</location>
    </subcellularLocation>
</comment>
<comment type="domain">
    <text evidence="1">Consists of three domains; the N-terminal catalytic domain, the editing domain and the C-terminal C-Ala domain. The editing domain removes incorrectly charged amino acids, while the C-Ala domain, along with tRNA(Ala), serves as a bridge to cooperatively bring together the editing and aminoacylation centers thus stimulating deacylation of misacylated tRNAs.</text>
</comment>
<comment type="similarity">
    <text evidence="1">Belongs to the class-II aminoacyl-tRNA synthetase family.</text>
</comment>
<reference key="1">
    <citation type="journal article" date="2006" name="Proc. Natl. Acad. Sci. U.S.A.">
        <title>Evolution of sensory complexity recorded in a myxobacterial genome.</title>
        <authorList>
            <person name="Goldman B.S."/>
            <person name="Nierman W.C."/>
            <person name="Kaiser D."/>
            <person name="Slater S.C."/>
            <person name="Durkin A.S."/>
            <person name="Eisen J.A."/>
            <person name="Ronning C.M."/>
            <person name="Barbazuk W.B."/>
            <person name="Blanchard M."/>
            <person name="Field C."/>
            <person name="Halling C."/>
            <person name="Hinkle G."/>
            <person name="Iartchuk O."/>
            <person name="Kim H.S."/>
            <person name="Mackenzie C."/>
            <person name="Madupu R."/>
            <person name="Miller N."/>
            <person name="Shvartsbeyn A."/>
            <person name="Sullivan S.A."/>
            <person name="Vaudin M."/>
            <person name="Wiegand R."/>
            <person name="Kaplan H.B."/>
        </authorList>
    </citation>
    <scope>NUCLEOTIDE SEQUENCE [LARGE SCALE GENOMIC DNA]</scope>
    <source>
        <strain>DK1622</strain>
    </source>
</reference>
<sequence length="898" mass="98244">MPSALTASEIREAFLKFFEERGHRRVASSSLVPANDPTLMFTNAGMVQFKDVFTGRETRDYRRATTSQKCVRAGGKHNDLDNVGFTARHHTFFEMLGNFSFGDYFKADAIAYGWEFVTRTLGLSTDRLAVTVFNGEGGTPWDEEAYELWKKQGVPAERLYKLGLKDNFWAMGDTGPCGPCSEIHYHQGDDIPCVEEAEGKKCQGVACDCDRWLEIWNLVFMQFERKEKDGPLIPLPKPSIDTGAGLERIASVVQGKRSNYETDLFQNILATVSELCGKPYSQESGASQRVVADHSRAAAFLISDGVQPSNEGRGYVLRRIMRRAIRHGTQQLGLEDVFFFKVVDRVIELMGDAYPELRESRTFVLEVCRHEETSFRQTLSRGLKLIEEELSELQKAGGKQLSGDVVFLLHGTYGFPWDLTQIIARERGLDVDLVRFEERLKEEADKNKFAGSGDKATGEVYLKLAERLGTTEFLGYEGEGHEGEGSIRAIVKDGAEVTQATQGDTVELVLDRTPFYGESGGQMGDTGRIVGHGGKAVAKVTDAQRPVPGLVVHSVEVSEGTFKVGDMVQAGVDSERRKSIRANHSATHLLHKALKLVLGEHVKQAGSVVAPDYLRFDFAHFSPATSAQLEQVEDLVNGWIRDNAGAETRVMSLEDAKKSGAVAMFGEKYGETVRVVTVHPESTELCGGTHVRRSGDIGLFKIASESGVASGVRRIVALTGIGALQHVREQEHELRKVAELLKSNPKEVSKRVEATQKRVKELERKVEEVAVKAQTASSKDLLEQARDVNGMKVLATQVDAADDNVLRGMADQLRDRIRSGVVAIGGEKDGRAIILVAATKDVVAKGINAGALVREMAKEVGGKGGGKAEMAQAGGPDASKLPAALEKLYELVKGVGTA</sequence>
<organism>
    <name type="scientific">Myxococcus xanthus (strain DK1622)</name>
    <dbReference type="NCBI Taxonomy" id="246197"/>
    <lineage>
        <taxon>Bacteria</taxon>
        <taxon>Pseudomonadati</taxon>
        <taxon>Myxococcota</taxon>
        <taxon>Myxococcia</taxon>
        <taxon>Myxococcales</taxon>
        <taxon>Cystobacterineae</taxon>
        <taxon>Myxococcaceae</taxon>
        <taxon>Myxococcus</taxon>
    </lineage>
</organism>
<proteinExistence type="inferred from homology"/>
<protein>
    <recommendedName>
        <fullName evidence="1">Alanine--tRNA ligase</fullName>
        <ecNumber evidence="1">6.1.1.7</ecNumber>
    </recommendedName>
    <alternativeName>
        <fullName evidence="1">Alanyl-tRNA synthetase</fullName>
        <shortName evidence="1">AlaRS</shortName>
    </alternativeName>
</protein>
<gene>
    <name evidence="1" type="primary">alaS</name>
    <name type="ordered locus">MXAN_5802</name>
</gene>
<dbReference type="EC" id="6.1.1.7" evidence="1"/>
<dbReference type="EMBL" id="CP000113">
    <property type="protein sequence ID" value="ABF92148.1"/>
    <property type="molecule type" value="Genomic_DNA"/>
</dbReference>
<dbReference type="RefSeq" id="WP_011555753.1">
    <property type="nucleotide sequence ID" value="NC_008095.1"/>
</dbReference>
<dbReference type="SMR" id="Q1D084"/>
<dbReference type="STRING" id="246197.MXAN_5802"/>
<dbReference type="EnsemblBacteria" id="ABF92148">
    <property type="protein sequence ID" value="ABF92148"/>
    <property type="gene ID" value="MXAN_5802"/>
</dbReference>
<dbReference type="GeneID" id="41363043"/>
<dbReference type="KEGG" id="mxa:MXAN_5802"/>
<dbReference type="eggNOG" id="COG0013">
    <property type="taxonomic scope" value="Bacteria"/>
</dbReference>
<dbReference type="HOGENOM" id="CLU_004485_1_1_7"/>
<dbReference type="OrthoDB" id="9803884at2"/>
<dbReference type="Proteomes" id="UP000002402">
    <property type="component" value="Chromosome"/>
</dbReference>
<dbReference type="GO" id="GO:0005829">
    <property type="term" value="C:cytosol"/>
    <property type="evidence" value="ECO:0007669"/>
    <property type="project" value="TreeGrafter"/>
</dbReference>
<dbReference type="GO" id="GO:0004813">
    <property type="term" value="F:alanine-tRNA ligase activity"/>
    <property type="evidence" value="ECO:0007669"/>
    <property type="project" value="UniProtKB-UniRule"/>
</dbReference>
<dbReference type="GO" id="GO:0002161">
    <property type="term" value="F:aminoacyl-tRNA deacylase activity"/>
    <property type="evidence" value="ECO:0007669"/>
    <property type="project" value="TreeGrafter"/>
</dbReference>
<dbReference type="GO" id="GO:0005524">
    <property type="term" value="F:ATP binding"/>
    <property type="evidence" value="ECO:0007669"/>
    <property type="project" value="UniProtKB-UniRule"/>
</dbReference>
<dbReference type="GO" id="GO:0000049">
    <property type="term" value="F:tRNA binding"/>
    <property type="evidence" value="ECO:0007669"/>
    <property type="project" value="UniProtKB-KW"/>
</dbReference>
<dbReference type="GO" id="GO:0008270">
    <property type="term" value="F:zinc ion binding"/>
    <property type="evidence" value="ECO:0007669"/>
    <property type="project" value="UniProtKB-UniRule"/>
</dbReference>
<dbReference type="GO" id="GO:0006419">
    <property type="term" value="P:alanyl-tRNA aminoacylation"/>
    <property type="evidence" value="ECO:0007669"/>
    <property type="project" value="UniProtKB-UniRule"/>
</dbReference>
<dbReference type="GO" id="GO:0045892">
    <property type="term" value="P:negative regulation of DNA-templated transcription"/>
    <property type="evidence" value="ECO:0007669"/>
    <property type="project" value="TreeGrafter"/>
</dbReference>
<dbReference type="CDD" id="cd00673">
    <property type="entry name" value="AlaRS_core"/>
    <property type="match status" value="1"/>
</dbReference>
<dbReference type="FunFam" id="3.10.310.40:FF:000001">
    <property type="entry name" value="Alanine--tRNA ligase"/>
    <property type="match status" value="1"/>
</dbReference>
<dbReference type="FunFam" id="3.30.54.20:FF:000001">
    <property type="entry name" value="Alanine--tRNA ligase"/>
    <property type="match status" value="1"/>
</dbReference>
<dbReference type="FunFam" id="3.30.930.10:FF:000004">
    <property type="entry name" value="Alanine--tRNA ligase"/>
    <property type="match status" value="1"/>
</dbReference>
<dbReference type="FunFam" id="3.30.980.10:FF:000004">
    <property type="entry name" value="Alanine--tRNA ligase, cytoplasmic"/>
    <property type="match status" value="1"/>
</dbReference>
<dbReference type="Gene3D" id="2.40.30.130">
    <property type="match status" value="1"/>
</dbReference>
<dbReference type="Gene3D" id="3.10.310.40">
    <property type="match status" value="1"/>
</dbReference>
<dbReference type="Gene3D" id="3.30.54.20">
    <property type="match status" value="1"/>
</dbReference>
<dbReference type="Gene3D" id="6.10.250.550">
    <property type="match status" value="1"/>
</dbReference>
<dbReference type="Gene3D" id="3.30.930.10">
    <property type="entry name" value="Bira Bifunctional Protein, Domain 2"/>
    <property type="match status" value="1"/>
</dbReference>
<dbReference type="Gene3D" id="3.30.980.10">
    <property type="entry name" value="Threonyl-trna Synthetase, Chain A, domain 2"/>
    <property type="match status" value="1"/>
</dbReference>
<dbReference type="HAMAP" id="MF_00036_B">
    <property type="entry name" value="Ala_tRNA_synth_B"/>
    <property type="match status" value="1"/>
</dbReference>
<dbReference type="InterPro" id="IPR045864">
    <property type="entry name" value="aa-tRNA-synth_II/BPL/LPL"/>
</dbReference>
<dbReference type="InterPro" id="IPR002318">
    <property type="entry name" value="Ala-tRNA-lgiase_IIc"/>
</dbReference>
<dbReference type="InterPro" id="IPR018162">
    <property type="entry name" value="Ala-tRNA-ligase_IIc_anticod-bd"/>
</dbReference>
<dbReference type="InterPro" id="IPR018165">
    <property type="entry name" value="Ala-tRNA-synth_IIc_core"/>
</dbReference>
<dbReference type="InterPro" id="IPR018164">
    <property type="entry name" value="Ala-tRNA-synth_IIc_N"/>
</dbReference>
<dbReference type="InterPro" id="IPR050058">
    <property type="entry name" value="Ala-tRNA_ligase"/>
</dbReference>
<dbReference type="InterPro" id="IPR023033">
    <property type="entry name" value="Ala_tRNA_ligase_euk/bac"/>
</dbReference>
<dbReference type="InterPro" id="IPR003156">
    <property type="entry name" value="DHHA1_dom"/>
</dbReference>
<dbReference type="InterPro" id="IPR018163">
    <property type="entry name" value="Thr/Ala-tRNA-synth_IIc_edit"/>
</dbReference>
<dbReference type="InterPro" id="IPR009000">
    <property type="entry name" value="Transl_B-barrel_sf"/>
</dbReference>
<dbReference type="InterPro" id="IPR012947">
    <property type="entry name" value="tRNA_SAD"/>
</dbReference>
<dbReference type="NCBIfam" id="TIGR00344">
    <property type="entry name" value="alaS"/>
    <property type="match status" value="1"/>
</dbReference>
<dbReference type="PANTHER" id="PTHR11777:SF9">
    <property type="entry name" value="ALANINE--TRNA LIGASE, CYTOPLASMIC"/>
    <property type="match status" value="1"/>
</dbReference>
<dbReference type="PANTHER" id="PTHR11777">
    <property type="entry name" value="ALANYL-TRNA SYNTHETASE"/>
    <property type="match status" value="1"/>
</dbReference>
<dbReference type="Pfam" id="PF02272">
    <property type="entry name" value="DHHA1"/>
    <property type="match status" value="1"/>
</dbReference>
<dbReference type="Pfam" id="PF01411">
    <property type="entry name" value="tRNA-synt_2c"/>
    <property type="match status" value="1"/>
</dbReference>
<dbReference type="Pfam" id="PF07973">
    <property type="entry name" value="tRNA_SAD"/>
    <property type="match status" value="1"/>
</dbReference>
<dbReference type="PRINTS" id="PR00980">
    <property type="entry name" value="TRNASYNTHALA"/>
</dbReference>
<dbReference type="SMART" id="SM00863">
    <property type="entry name" value="tRNA_SAD"/>
    <property type="match status" value="1"/>
</dbReference>
<dbReference type="SUPFAM" id="SSF55681">
    <property type="entry name" value="Class II aaRS and biotin synthetases"/>
    <property type="match status" value="1"/>
</dbReference>
<dbReference type="SUPFAM" id="SSF101353">
    <property type="entry name" value="Putative anticodon-binding domain of alanyl-tRNA synthetase (AlaRS)"/>
    <property type="match status" value="1"/>
</dbReference>
<dbReference type="SUPFAM" id="SSF55186">
    <property type="entry name" value="ThrRS/AlaRS common domain"/>
    <property type="match status" value="1"/>
</dbReference>
<dbReference type="SUPFAM" id="SSF50447">
    <property type="entry name" value="Translation proteins"/>
    <property type="match status" value="1"/>
</dbReference>
<dbReference type="PROSITE" id="PS50860">
    <property type="entry name" value="AA_TRNA_LIGASE_II_ALA"/>
    <property type="match status" value="1"/>
</dbReference>
<feature type="chain" id="PRO_0000347692" description="Alanine--tRNA ligase">
    <location>
        <begin position="1"/>
        <end position="898"/>
    </location>
</feature>
<feature type="binding site" evidence="1">
    <location>
        <position position="584"/>
    </location>
    <ligand>
        <name>Zn(2+)</name>
        <dbReference type="ChEBI" id="CHEBI:29105"/>
    </ligand>
</feature>
<feature type="binding site" evidence="1">
    <location>
        <position position="588"/>
    </location>
    <ligand>
        <name>Zn(2+)</name>
        <dbReference type="ChEBI" id="CHEBI:29105"/>
    </ligand>
</feature>
<feature type="binding site" evidence="1">
    <location>
        <position position="686"/>
    </location>
    <ligand>
        <name>Zn(2+)</name>
        <dbReference type="ChEBI" id="CHEBI:29105"/>
    </ligand>
</feature>
<feature type="binding site" evidence="1">
    <location>
        <position position="690"/>
    </location>
    <ligand>
        <name>Zn(2+)</name>
        <dbReference type="ChEBI" id="CHEBI:29105"/>
    </ligand>
</feature>
<keyword id="KW-0030">Aminoacyl-tRNA synthetase</keyword>
<keyword id="KW-0067">ATP-binding</keyword>
<keyword id="KW-0963">Cytoplasm</keyword>
<keyword id="KW-0436">Ligase</keyword>
<keyword id="KW-0479">Metal-binding</keyword>
<keyword id="KW-0547">Nucleotide-binding</keyword>
<keyword id="KW-0648">Protein biosynthesis</keyword>
<keyword id="KW-1185">Reference proteome</keyword>
<keyword id="KW-0694">RNA-binding</keyword>
<keyword id="KW-0820">tRNA-binding</keyword>
<keyword id="KW-0862">Zinc</keyword>
<name>SYA_MYXXD</name>
<evidence type="ECO:0000255" key="1">
    <source>
        <dbReference type="HAMAP-Rule" id="MF_00036"/>
    </source>
</evidence>